<sequence>RELDMGAAERSREPGSPRLTEVSPELKDRKEDAKGMEDEGQTKIKQRRSRTNFTLEQLNELERLFDETHYPDAFMREELSQRLGLSEARVQVWFQNRRAKCRKQENQLHKGVLIGAASQFEACRVAPYVNVGALRMPFQQDSHCNVTPLSFQVQAHVQLDSAVRAAHHHLHPHLAAHGPYMMFPAPPFGLPLATLAADSASAASVVAAAAAAKTTSKNSSIADLRLKAKKHAAALGL</sequence>
<dbReference type="EMBL" id="AJ002258">
    <property type="protein sequence ID" value="CAA05283.1"/>
    <property type="status" value="ALT_INIT"/>
    <property type="molecule type" value="mRNA"/>
</dbReference>
<dbReference type="EMBL" id="AJ002259">
    <property type="protein sequence ID" value="CAA05284.1"/>
    <property type="status" value="ALT_INIT"/>
    <property type="molecule type" value="mRNA"/>
</dbReference>
<dbReference type="EMBL" id="AJ002260">
    <property type="protein sequence ID" value="CAA05285.1"/>
    <property type="molecule type" value="mRNA"/>
</dbReference>
<dbReference type="RefSeq" id="NP_037160.1">
    <property type="nucleotide sequence ID" value="NM_013028.1"/>
</dbReference>
<dbReference type="SMR" id="O35750"/>
<dbReference type="FunCoup" id="O35750">
    <property type="interactions" value="367"/>
</dbReference>
<dbReference type="STRING" id="10116.ENSRNOP00000016843"/>
<dbReference type="PhosphoSitePlus" id="O35750"/>
<dbReference type="PaxDb" id="10116-ENSRNOP00000016843"/>
<dbReference type="GeneID" id="25546"/>
<dbReference type="KEGG" id="rno:25546"/>
<dbReference type="UCSC" id="RGD:3674">
    <molecule id="O35750-1"/>
    <property type="organism name" value="rat"/>
</dbReference>
<dbReference type="AGR" id="RGD:3674"/>
<dbReference type="CTD" id="6474"/>
<dbReference type="RGD" id="3674">
    <property type="gene designation" value="Shox2"/>
</dbReference>
<dbReference type="eggNOG" id="KOG0490">
    <property type="taxonomic scope" value="Eukaryota"/>
</dbReference>
<dbReference type="InParanoid" id="O35750"/>
<dbReference type="OrthoDB" id="6159439at2759"/>
<dbReference type="PhylomeDB" id="O35750"/>
<dbReference type="Proteomes" id="UP000002494">
    <property type="component" value="Unplaced"/>
</dbReference>
<dbReference type="GO" id="GO:0005634">
    <property type="term" value="C:nucleus"/>
    <property type="evidence" value="ECO:0000318"/>
    <property type="project" value="GO_Central"/>
</dbReference>
<dbReference type="GO" id="GO:0000981">
    <property type="term" value="F:DNA-binding transcription factor activity, RNA polymerase II-specific"/>
    <property type="evidence" value="ECO:0000318"/>
    <property type="project" value="GO_Central"/>
</dbReference>
<dbReference type="GO" id="GO:0043565">
    <property type="term" value="F:sequence-specific DNA binding"/>
    <property type="evidence" value="ECO:0000266"/>
    <property type="project" value="RGD"/>
</dbReference>
<dbReference type="GO" id="GO:1990837">
    <property type="term" value="F:sequence-specific double-stranded DNA binding"/>
    <property type="evidence" value="ECO:0000318"/>
    <property type="project" value="GO_Central"/>
</dbReference>
<dbReference type="GO" id="GO:0003209">
    <property type="term" value="P:cardiac atrium morphogenesis"/>
    <property type="evidence" value="ECO:0000266"/>
    <property type="project" value="RGD"/>
</dbReference>
<dbReference type="GO" id="GO:0060920">
    <property type="term" value="P:cardiac pacemaker cell differentiation"/>
    <property type="evidence" value="ECO:0000266"/>
    <property type="project" value="RGD"/>
</dbReference>
<dbReference type="GO" id="GO:0003213">
    <property type="term" value="P:cardiac right atrium morphogenesis"/>
    <property type="evidence" value="ECO:0000266"/>
    <property type="project" value="RGD"/>
</dbReference>
<dbReference type="GO" id="GO:0060351">
    <property type="term" value="P:cartilage development involved in endochondral bone morphogenesis"/>
    <property type="evidence" value="ECO:0000266"/>
    <property type="project" value="RGD"/>
</dbReference>
<dbReference type="GO" id="GO:0002063">
    <property type="term" value="P:chondrocyte development"/>
    <property type="evidence" value="ECO:0000266"/>
    <property type="project" value="RGD"/>
</dbReference>
<dbReference type="GO" id="GO:0002062">
    <property type="term" value="P:chondrocyte differentiation"/>
    <property type="evidence" value="ECO:0000266"/>
    <property type="project" value="RGD"/>
</dbReference>
<dbReference type="GO" id="GO:0048557">
    <property type="term" value="P:embryonic digestive tract morphogenesis"/>
    <property type="evidence" value="ECO:0000266"/>
    <property type="project" value="RGD"/>
</dbReference>
<dbReference type="GO" id="GO:0035115">
    <property type="term" value="P:embryonic forelimb morphogenesis"/>
    <property type="evidence" value="ECO:0000266"/>
    <property type="project" value="RGD"/>
</dbReference>
<dbReference type="GO" id="GO:0030326">
    <property type="term" value="P:embryonic limb morphogenesis"/>
    <property type="evidence" value="ECO:0000266"/>
    <property type="project" value="RGD"/>
</dbReference>
<dbReference type="GO" id="GO:0048598">
    <property type="term" value="P:embryonic morphogenesis"/>
    <property type="evidence" value="ECO:0000266"/>
    <property type="project" value="RGD"/>
</dbReference>
<dbReference type="GO" id="GO:0060272">
    <property type="term" value="P:embryonic skeletal joint morphogenesis"/>
    <property type="evidence" value="ECO:0000266"/>
    <property type="project" value="RGD"/>
</dbReference>
<dbReference type="GO" id="GO:0003170">
    <property type="term" value="P:heart valve development"/>
    <property type="evidence" value="ECO:0000266"/>
    <property type="project" value="RGD"/>
</dbReference>
<dbReference type="GO" id="GO:0010463">
    <property type="term" value="P:mesenchymal cell proliferation"/>
    <property type="evidence" value="ECO:0000266"/>
    <property type="project" value="RGD"/>
</dbReference>
<dbReference type="GO" id="GO:0060415">
    <property type="term" value="P:muscle tissue morphogenesis"/>
    <property type="evidence" value="ECO:0000266"/>
    <property type="project" value="RGD"/>
</dbReference>
<dbReference type="GO" id="GO:0000122">
    <property type="term" value="P:negative regulation of transcription by RNA polymerase II"/>
    <property type="evidence" value="ECO:0000266"/>
    <property type="project" value="RGD"/>
</dbReference>
<dbReference type="GO" id="GO:0001649">
    <property type="term" value="P:osteoblast differentiation"/>
    <property type="evidence" value="ECO:0000266"/>
    <property type="project" value="RGD"/>
</dbReference>
<dbReference type="GO" id="GO:0050772">
    <property type="term" value="P:positive regulation of axonogenesis"/>
    <property type="evidence" value="ECO:0000266"/>
    <property type="project" value="RGD"/>
</dbReference>
<dbReference type="GO" id="GO:0002053">
    <property type="term" value="P:positive regulation of mesenchymal cell proliferation"/>
    <property type="evidence" value="ECO:0000266"/>
    <property type="project" value="RGD"/>
</dbReference>
<dbReference type="GO" id="GO:0048743">
    <property type="term" value="P:positive regulation of skeletal muscle fiber development"/>
    <property type="evidence" value="ECO:0000266"/>
    <property type="project" value="RGD"/>
</dbReference>
<dbReference type="GO" id="GO:0045880">
    <property type="term" value="P:positive regulation of smoothened signaling pathway"/>
    <property type="evidence" value="ECO:0000266"/>
    <property type="project" value="RGD"/>
</dbReference>
<dbReference type="GO" id="GO:2000648">
    <property type="term" value="P:positive regulation of stem cell proliferation"/>
    <property type="evidence" value="ECO:0000266"/>
    <property type="project" value="RGD"/>
</dbReference>
<dbReference type="GO" id="GO:2000172">
    <property type="term" value="P:regulation of branching morphogenesis of a nerve"/>
    <property type="evidence" value="ECO:0000266"/>
    <property type="project" value="RGD"/>
</dbReference>
<dbReference type="GO" id="GO:0032330">
    <property type="term" value="P:regulation of chondrocyte differentiation"/>
    <property type="evidence" value="ECO:0000266"/>
    <property type="project" value="RGD"/>
</dbReference>
<dbReference type="GO" id="GO:0002027">
    <property type="term" value="P:regulation of heart rate"/>
    <property type="evidence" value="ECO:0000266"/>
    <property type="project" value="RGD"/>
</dbReference>
<dbReference type="GO" id="GO:0006357">
    <property type="term" value="P:regulation of transcription by RNA polymerase II"/>
    <property type="evidence" value="ECO:0000318"/>
    <property type="project" value="GO_Central"/>
</dbReference>
<dbReference type="GO" id="GO:0060931">
    <property type="term" value="P:sinoatrial node cell development"/>
    <property type="evidence" value="ECO:0000266"/>
    <property type="project" value="RGD"/>
</dbReference>
<dbReference type="GO" id="GO:0003163">
    <property type="term" value="P:sinoatrial node development"/>
    <property type="evidence" value="ECO:0000266"/>
    <property type="project" value="RGD"/>
</dbReference>
<dbReference type="GO" id="GO:0003172">
    <property type="term" value="P:sinoatrial valve development"/>
    <property type="evidence" value="ECO:0000266"/>
    <property type="project" value="RGD"/>
</dbReference>
<dbReference type="GO" id="GO:0007224">
    <property type="term" value="P:smoothened signaling pathway"/>
    <property type="evidence" value="ECO:0000266"/>
    <property type="project" value="RGD"/>
</dbReference>
<dbReference type="GO" id="GO:0072089">
    <property type="term" value="P:stem cell proliferation"/>
    <property type="evidence" value="ECO:0000266"/>
    <property type="project" value="RGD"/>
</dbReference>
<dbReference type="CDD" id="cd00086">
    <property type="entry name" value="homeodomain"/>
    <property type="match status" value="1"/>
</dbReference>
<dbReference type="FunFam" id="1.10.10.60:FF:000057">
    <property type="entry name" value="Short stature homeobox 2"/>
    <property type="match status" value="1"/>
</dbReference>
<dbReference type="Gene3D" id="1.10.10.60">
    <property type="entry name" value="Homeodomain-like"/>
    <property type="match status" value="1"/>
</dbReference>
<dbReference type="InterPro" id="IPR001356">
    <property type="entry name" value="HD"/>
</dbReference>
<dbReference type="InterPro" id="IPR017970">
    <property type="entry name" value="Homeobox_CS"/>
</dbReference>
<dbReference type="InterPro" id="IPR009057">
    <property type="entry name" value="Homeodomain-like_sf"/>
</dbReference>
<dbReference type="InterPro" id="IPR000047">
    <property type="entry name" value="HTH_motif"/>
</dbReference>
<dbReference type="InterPro" id="IPR003654">
    <property type="entry name" value="OAR_dom"/>
</dbReference>
<dbReference type="InterPro" id="IPR052631">
    <property type="entry name" value="Paired_homeobox_Bicoid"/>
</dbReference>
<dbReference type="PANTHER" id="PTHR46255">
    <property type="entry name" value="SHORT STATURE HOMEOBOX"/>
    <property type="match status" value="1"/>
</dbReference>
<dbReference type="PANTHER" id="PTHR46255:SF1">
    <property type="entry name" value="SHORT STATURE HOMEOBOX PROTEIN 2"/>
    <property type="match status" value="1"/>
</dbReference>
<dbReference type="Pfam" id="PF00046">
    <property type="entry name" value="Homeodomain"/>
    <property type="match status" value="1"/>
</dbReference>
<dbReference type="Pfam" id="PF03826">
    <property type="entry name" value="OAR"/>
    <property type="match status" value="1"/>
</dbReference>
<dbReference type="PRINTS" id="PR00031">
    <property type="entry name" value="HTHREPRESSR"/>
</dbReference>
<dbReference type="SMART" id="SM00389">
    <property type="entry name" value="HOX"/>
    <property type="match status" value="1"/>
</dbReference>
<dbReference type="SUPFAM" id="SSF46689">
    <property type="entry name" value="Homeodomain-like"/>
    <property type="match status" value="1"/>
</dbReference>
<dbReference type="PROSITE" id="PS00027">
    <property type="entry name" value="HOMEOBOX_1"/>
    <property type="match status" value="1"/>
</dbReference>
<dbReference type="PROSITE" id="PS50071">
    <property type="entry name" value="HOMEOBOX_2"/>
    <property type="match status" value="1"/>
</dbReference>
<dbReference type="PROSITE" id="PS50803">
    <property type="entry name" value="OAR"/>
    <property type="match status" value="1"/>
</dbReference>
<protein>
    <recommendedName>
        <fullName>Short stature homeobox protein 2</fullName>
    </recommendedName>
    <alternativeName>
        <fullName>Paired family homeodomain protein Prx3</fullName>
    </alternativeName>
</protein>
<name>SHOX2_RAT</name>
<proteinExistence type="evidence at transcript level"/>
<feature type="chain" id="PRO_0000049294" description="Short stature homeobox protein 2">
    <location>
        <begin position="1" status="less than"/>
        <end position="237"/>
    </location>
</feature>
<feature type="DNA-binding region" description="Homeobox" evidence="1">
    <location>
        <begin position="46"/>
        <end position="105"/>
    </location>
</feature>
<feature type="region of interest" description="Disordered" evidence="3">
    <location>
        <begin position="1"/>
        <end position="50"/>
    </location>
</feature>
<feature type="short sequence motif" description="OAR" evidence="2">
    <location>
        <begin position="219"/>
        <end position="232"/>
    </location>
</feature>
<feature type="compositionally biased region" description="Basic and acidic residues" evidence="3">
    <location>
        <begin position="24"/>
        <end position="42"/>
    </location>
</feature>
<feature type="splice variant" id="VSP_002290" description="In isoform 2." evidence="4 5">
    <location>
        <begin position="141"/>
        <end position="152"/>
    </location>
</feature>
<feature type="sequence conflict" description="In Ref. 1; CAA05285." evidence="6" ref="1">
    <original>SREPGSPRLTE</original>
    <variation>HTCGPSVVPSS</variation>
    <location>
        <begin position="11"/>
        <end position="21"/>
    </location>
</feature>
<feature type="sequence conflict" description="In Ref. 1; CAA05285." evidence="6" ref="1">
    <original>P</original>
    <variation>G</variation>
    <location>
        <position position="172"/>
    </location>
</feature>
<feature type="non-terminal residue">
    <location>
        <position position="1"/>
    </location>
</feature>
<evidence type="ECO:0000255" key="1">
    <source>
        <dbReference type="PROSITE-ProRule" id="PRU00108"/>
    </source>
</evidence>
<evidence type="ECO:0000255" key="2">
    <source>
        <dbReference type="PROSITE-ProRule" id="PRU00138"/>
    </source>
</evidence>
<evidence type="ECO:0000256" key="3">
    <source>
        <dbReference type="SAM" id="MobiDB-lite"/>
    </source>
</evidence>
<evidence type="ECO:0000303" key="4">
    <source>
    </source>
</evidence>
<evidence type="ECO:0000303" key="5">
    <source ref="2"/>
</evidence>
<evidence type="ECO:0000305" key="6"/>
<reference key="1">
    <citation type="journal article" date="1997" name="Proc. Natl. Acad. Sci. U.S.A.">
        <title>Homeobox gene Prx3 expression in rodent brain and extraneural tissues.</title>
        <authorList>
            <person name="van Schaick H.S.A."/>
            <person name="Smidt M.P."/>
            <person name="Rovescalli A.C."/>
            <person name="Luijten M."/>
            <person name="van der Kleij A.A.M."/>
            <person name="Asoh S."/>
            <person name="Kozak C.A."/>
            <person name="Nirenberg M.W."/>
            <person name="Burbach J.P.H."/>
        </authorList>
    </citation>
    <scope>NUCLEOTIDE SEQUENCE [MRNA] (ISOFORMS 1 AND 2)</scope>
    <source>
        <tissue>Embryonic brain</tissue>
    </source>
</reference>
<reference key="2">
    <citation type="submission" date="1997-10" db="EMBL/GenBank/DDBJ databases">
        <authorList>
            <person name="Bois P."/>
        </authorList>
    </citation>
    <scope>NUCLEOTIDE SEQUENCE [MRNA] (ISOFORMS 1 AND 2)</scope>
    <source>
        <tissue>Brain</tissue>
    </source>
</reference>
<organism>
    <name type="scientific">Rattus norvegicus</name>
    <name type="common">Rat</name>
    <dbReference type="NCBI Taxonomy" id="10116"/>
    <lineage>
        <taxon>Eukaryota</taxon>
        <taxon>Metazoa</taxon>
        <taxon>Chordata</taxon>
        <taxon>Craniata</taxon>
        <taxon>Vertebrata</taxon>
        <taxon>Euteleostomi</taxon>
        <taxon>Mammalia</taxon>
        <taxon>Eutheria</taxon>
        <taxon>Euarchontoglires</taxon>
        <taxon>Glires</taxon>
        <taxon>Rodentia</taxon>
        <taxon>Myomorpha</taxon>
        <taxon>Muroidea</taxon>
        <taxon>Muridae</taxon>
        <taxon>Murinae</taxon>
        <taxon>Rattus</taxon>
    </lineage>
</organism>
<keyword id="KW-0025">Alternative splicing</keyword>
<keyword id="KW-0217">Developmental protein</keyword>
<keyword id="KW-0238">DNA-binding</keyword>
<keyword id="KW-0371">Homeobox</keyword>
<keyword id="KW-0539">Nucleus</keyword>
<keyword id="KW-1185">Reference proteome</keyword>
<gene>
    <name type="primary">Shox2</name>
    <name type="synonym">Prx3</name>
</gene>
<accession>O35750</accession>
<accession>O35749</accession>
<accession>O35751</accession>
<comment type="function">
    <text>May be a growth regulator and have a role in specifying neural systems involved in processing somatosensory information, as well as in face and body structure formation.</text>
</comment>
<comment type="subcellular location">
    <subcellularLocation>
        <location>Nucleus</location>
    </subcellularLocation>
</comment>
<comment type="alternative products">
    <event type="alternative splicing"/>
    <isoform>
        <id>O35750-1</id>
        <name>1</name>
        <name>SHOX2A</name>
        <sequence type="displayed"/>
    </isoform>
    <isoform>
        <id>O35750-2</id>
        <name>2</name>
        <name>SHOX2B</name>
        <sequence type="described" ref="VSP_002290"/>
    </isoform>
</comment>
<comment type="tissue specificity">
    <text>Expression restricted to a few regions in the brain: thalamic, tectal and brainstem structures that include relay nuclei of the visual and auditory systems as well as other ascending systems conveying somatosensory information. Not expressed in kidney, heart, lung, tongue and adrenal gland.</text>
</comment>
<comment type="developmental stage">
    <text>Neural expression in lateral and medial geniculate complex, superior and inferior colliculus, superficial gray layer of the superior colliculus, pontine reticular formation and inferior olive. Also expressed in non-neuronal structures around the oral cavity and in hip and shoulder regions.</text>
</comment>
<comment type="similarity">
    <text evidence="6">Belongs to the paired homeobox family. Bicoid subfamily.</text>
</comment>
<comment type="sequence caution" evidence="6">
    <conflict type="erroneous initiation">
        <sequence resource="EMBL-CDS" id="CAA05283"/>
    </conflict>
</comment>
<comment type="sequence caution" evidence="6">
    <conflict type="erroneous initiation">
        <sequence resource="EMBL-CDS" id="CAA05284"/>
    </conflict>
</comment>